<gene>
    <name evidence="1" type="primary">def</name>
    <name type="ordered locus">Ent638_3718</name>
</gene>
<accession>A4WF95</accession>
<organism>
    <name type="scientific">Enterobacter sp. (strain 638)</name>
    <dbReference type="NCBI Taxonomy" id="399742"/>
    <lineage>
        <taxon>Bacteria</taxon>
        <taxon>Pseudomonadati</taxon>
        <taxon>Pseudomonadota</taxon>
        <taxon>Gammaproteobacteria</taxon>
        <taxon>Enterobacterales</taxon>
        <taxon>Enterobacteriaceae</taxon>
        <taxon>Enterobacter</taxon>
    </lineage>
</organism>
<feature type="chain" id="PRO_1000058243" description="Peptide deformylase">
    <location>
        <begin position="1"/>
        <end position="169"/>
    </location>
</feature>
<feature type="active site" evidence="1">
    <location>
        <position position="134"/>
    </location>
</feature>
<feature type="binding site" evidence="1">
    <location>
        <position position="91"/>
    </location>
    <ligand>
        <name>Fe cation</name>
        <dbReference type="ChEBI" id="CHEBI:24875"/>
    </ligand>
</feature>
<feature type="binding site" evidence="1">
    <location>
        <position position="133"/>
    </location>
    <ligand>
        <name>Fe cation</name>
        <dbReference type="ChEBI" id="CHEBI:24875"/>
    </ligand>
</feature>
<feature type="binding site" evidence="1">
    <location>
        <position position="137"/>
    </location>
    <ligand>
        <name>Fe cation</name>
        <dbReference type="ChEBI" id="CHEBI:24875"/>
    </ligand>
</feature>
<comment type="function">
    <text evidence="1">Removes the formyl group from the N-terminal Met of newly synthesized proteins. Requires at least a dipeptide for an efficient rate of reaction. N-terminal L-methionine is a prerequisite for activity but the enzyme has broad specificity at other positions.</text>
</comment>
<comment type="catalytic activity">
    <reaction evidence="1">
        <text>N-terminal N-formyl-L-methionyl-[peptide] + H2O = N-terminal L-methionyl-[peptide] + formate</text>
        <dbReference type="Rhea" id="RHEA:24420"/>
        <dbReference type="Rhea" id="RHEA-COMP:10639"/>
        <dbReference type="Rhea" id="RHEA-COMP:10640"/>
        <dbReference type="ChEBI" id="CHEBI:15377"/>
        <dbReference type="ChEBI" id="CHEBI:15740"/>
        <dbReference type="ChEBI" id="CHEBI:49298"/>
        <dbReference type="ChEBI" id="CHEBI:64731"/>
        <dbReference type="EC" id="3.5.1.88"/>
    </reaction>
</comment>
<comment type="cofactor">
    <cofactor evidence="1">
        <name>Fe(2+)</name>
        <dbReference type="ChEBI" id="CHEBI:29033"/>
    </cofactor>
    <text evidence="1">Binds 1 Fe(2+) ion.</text>
</comment>
<comment type="similarity">
    <text evidence="1">Belongs to the polypeptide deformylase family.</text>
</comment>
<evidence type="ECO:0000255" key="1">
    <source>
        <dbReference type="HAMAP-Rule" id="MF_00163"/>
    </source>
</evidence>
<dbReference type="EC" id="3.5.1.88" evidence="1"/>
<dbReference type="EMBL" id="CP000653">
    <property type="protein sequence ID" value="ABP62375.1"/>
    <property type="molecule type" value="Genomic_DNA"/>
</dbReference>
<dbReference type="RefSeq" id="WP_015960696.1">
    <property type="nucleotide sequence ID" value="NC_009436.1"/>
</dbReference>
<dbReference type="SMR" id="A4WF95"/>
<dbReference type="STRING" id="399742.Ent638_3718"/>
<dbReference type="KEGG" id="ent:Ent638_3718"/>
<dbReference type="eggNOG" id="COG0242">
    <property type="taxonomic scope" value="Bacteria"/>
</dbReference>
<dbReference type="HOGENOM" id="CLU_061901_2_1_6"/>
<dbReference type="OrthoDB" id="9804313at2"/>
<dbReference type="Proteomes" id="UP000000230">
    <property type="component" value="Chromosome"/>
</dbReference>
<dbReference type="GO" id="GO:0046872">
    <property type="term" value="F:metal ion binding"/>
    <property type="evidence" value="ECO:0007669"/>
    <property type="project" value="UniProtKB-KW"/>
</dbReference>
<dbReference type="GO" id="GO:0042586">
    <property type="term" value="F:peptide deformylase activity"/>
    <property type="evidence" value="ECO:0007669"/>
    <property type="project" value="UniProtKB-UniRule"/>
</dbReference>
<dbReference type="GO" id="GO:0043686">
    <property type="term" value="P:co-translational protein modification"/>
    <property type="evidence" value="ECO:0007669"/>
    <property type="project" value="TreeGrafter"/>
</dbReference>
<dbReference type="GO" id="GO:0006412">
    <property type="term" value="P:translation"/>
    <property type="evidence" value="ECO:0007669"/>
    <property type="project" value="UniProtKB-UniRule"/>
</dbReference>
<dbReference type="CDD" id="cd00487">
    <property type="entry name" value="Pep_deformylase"/>
    <property type="match status" value="1"/>
</dbReference>
<dbReference type="FunFam" id="3.90.45.10:FF:000001">
    <property type="entry name" value="Peptide deformylase"/>
    <property type="match status" value="1"/>
</dbReference>
<dbReference type="Gene3D" id="3.90.45.10">
    <property type="entry name" value="Peptide deformylase"/>
    <property type="match status" value="1"/>
</dbReference>
<dbReference type="HAMAP" id="MF_00163">
    <property type="entry name" value="Pep_deformylase"/>
    <property type="match status" value="1"/>
</dbReference>
<dbReference type="InterPro" id="IPR023635">
    <property type="entry name" value="Peptide_deformylase"/>
</dbReference>
<dbReference type="InterPro" id="IPR036821">
    <property type="entry name" value="Peptide_deformylase_sf"/>
</dbReference>
<dbReference type="NCBIfam" id="TIGR00079">
    <property type="entry name" value="pept_deformyl"/>
    <property type="match status" value="1"/>
</dbReference>
<dbReference type="NCBIfam" id="NF001159">
    <property type="entry name" value="PRK00150.1-3"/>
    <property type="match status" value="1"/>
</dbReference>
<dbReference type="PANTHER" id="PTHR10458">
    <property type="entry name" value="PEPTIDE DEFORMYLASE"/>
    <property type="match status" value="1"/>
</dbReference>
<dbReference type="PANTHER" id="PTHR10458:SF21">
    <property type="entry name" value="PEPTIDE DEFORMYLASE"/>
    <property type="match status" value="1"/>
</dbReference>
<dbReference type="Pfam" id="PF01327">
    <property type="entry name" value="Pep_deformylase"/>
    <property type="match status" value="1"/>
</dbReference>
<dbReference type="PIRSF" id="PIRSF004749">
    <property type="entry name" value="Pep_def"/>
    <property type="match status" value="1"/>
</dbReference>
<dbReference type="PRINTS" id="PR01576">
    <property type="entry name" value="PDEFORMYLASE"/>
</dbReference>
<dbReference type="SUPFAM" id="SSF56420">
    <property type="entry name" value="Peptide deformylase"/>
    <property type="match status" value="1"/>
</dbReference>
<reference key="1">
    <citation type="journal article" date="2010" name="PLoS Genet.">
        <title>Genome sequence of the plant growth promoting endophytic bacterium Enterobacter sp. 638.</title>
        <authorList>
            <person name="Taghavi S."/>
            <person name="van der Lelie D."/>
            <person name="Hoffman A."/>
            <person name="Zhang Y.B."/>
            <person name="Walla M.D."/>
            <person name="Vangronsveld J."/>
            <person name="Newman L."/>
            <person name="Monchy S."/>
        </authorList>
    </citation>
    <scope>NUCLEOTIDE SEQUENCE [LARGE SCALE GENOMIC DNA]</scope>
    <source>
        <strain>638</strain>
    </source>
</reference>
<name>DEF_ENT38</name>
<keyword id="KW-0378">Hydrolase</keyword>
<keyword id="KW-0408">Iron</keyword>
<keyword id="KW-0479">Metal-binding</keyword>
<keyword id="KW-0648">Protein biosynthesis</keyword>
<sequence>MAVLQVLHIPDERLRIVAEPVKEVNAEIQRIVDDMFDTMYAEEGIGLAATQVDIHKRIIVIDVSENREERLVLINPELLEQSGETGIEEGCLSIPEQRALVPRAEKVKIRALDRDGKSFELEADDLLAICIQHEMDHLVGKLFIDYLSPLKQQRIRQKVEKLDRMRTRA</sequence>
<protein>
    <recommendedName>
        <fullName evidence="1">Peptide deformylase</fullName>
        <shortName evidence="1">PDF</shortName>
        <ecNumber evidence="1">3.5.1.88</ecNumber>
    </recommendedName>
    <alternativeName>
        <fullName evidence="1">Polypeptide deformylase</fullName>
    </alternativeName>
</protein>
<proteinExistence type="inferred from homology"/>